<accession>A4VGK9</accession>
<evidence type="ECO:0000255" key="1">
    <source>
        <dbReference type="HAMAP-Rule" id="MF_00170"/>
    </source>
</evidence>
<dbReference type="EC" id="5.3.1.6" evidence="1"/>
<dbReference type="EMBL" id="CP000304">
    <property type="protein sequence ID" value="ABP78110.1"/>
    <property type="molecule type" value="Genomic_DNA"/>
</dbReference>
<dbReference type="RefSeq" id="WP_011911640.1">
    <property type="nucleotide sequence ID" value="NC_009434.1"/>
</dbReference>
<dbReference type="SMR" id="A4VGK9"/>
<dbReference type="KEGG" id="psa:PST_0404"/>
<dbReference type="eggNOG" id="COG0120">
    <property type="taxonomic scope" value="Bacteria"/>
</dbReference>
<dbReference type="HOGENOM" id="CLU_056590_1_1_6"/>
<dbReference type="UniPathway" id="UPA00115">
    <property type="reaction ID" value="UER00412"/>
</dbReference>
<dbReference type="Proteomes" id="UP000000233">
    <property type="component" value="Chromosome"/>
</dbReference>
<dbReference type="GO" id="GO:0005829">
    <property type="term" value="C:cytosol"/>
    <property type="evidence" value="ECO:0007669"/>
    <property type="project" value="TreeGrafter"/>
</dbReference>
<dbReference type="GO" id="GO:0004751">
    <property type="term" value="F:ribose-5-phosphate isomerase activity"/>
    <property type="evidence" value="ECO:0007669"/>
    <property type="project" value="UniProtKB-UniRule"/>
</dbReference>
<dbReference type="GO" id="GO:0006014">
    <property type="term" value="P:D-ribose metabolic process"/>
    <property type="evidence" value="ECO:0007669"/>
    <property type="project" value="TreeGrafter"/>
</dbReference>
<dbReference type="GO" id="GO:0009052">
    <property type="term" value="P:pentose-phosphate shunt, non-oxidative branch"/>
    <property type="evidence" value="ECO:0007669"/>
    <property type="project" value="UniProtKB-UniRule"/>
</dbReference>
<dbReference type="CDD" id="cd01398">
    <property type="entry name" value="RPI_A"/>
    <property type="match status" value="1"/>
</dbReference>
<dbReference type="FunFam" id="3.30.70.260:FF:000004">
    <property type="entry name" value="Ribose-5-phosphate isomerase A"/>
    <property type="match status" value="1"/>
</dbReference>
<dbReference type="FunFam" id="3.40.50.1360:FF:000001">
    <property type="entry name" value="Ribose-5-phosphate isomerase A"/>
    <property type="match status" value="1"/>
</dbReference>
<dbReference type="Gene3D" id="3.30.70.260">
    <property type="match status" value="1"/>
</dbReference>
<dbReference type="Gene3D" id="3.40.50.1360">
    <property type="match status" value="1"/>
</dbReference>
<dbReference type="HAMAP" id="MF_00170">
    <property type="entry name" value="Rib_5P_isom_A"/>
    <property type="match status" value="1"/>
</dbReference>
<dbReference type="InterPro" id="IPR037171">
    <property type="entry name" value="NagB/RpiA_transferase-like"/>
</dbReference>
<dbReference type="InterPro" id="IPR020672">
    <property type="entry name" value="Ribose5P_isomerase_typA_subgr"/>
</dbReference>
<dbReference type="InterPro" id="IPR004788">
    <property type="entry name" value="Ribose5P_isomerase_type_A"/>
</dbReference>
<dbReference type="NCBIfam" id="NF001924">
    <property type="entry name" value="PRK00702.1"/>
    <property type="match status" value="1"/>
</dbReference>
<dbReference type="NCBIfam" id="TIGR00021">
    <property type="entry name" value="rpiA"/>
    <property type="match status" value="1"/>
</dbReference>
<dbReference type="PANTHER" id="PTHR11934">
    <property type="entry name" value="RIBOSE-5-PHOSPHATE ISOMERASE"/>
    <property type="match status" value="1"/>
</dbReference>
<dbReference type="PANTHER" id="PTHR11934:SF0">
    <property type="entry name" value="RIBOSE-5-PHOSPHATE ISOMERASE"/>
    <property type="match status" value="1"/>
</dbReference>
<dbReference type="Pfam" id="PF06026">
    <property type="entry name" value="Rib_5-P_isom_A"/>
    <property type="match status" value="1"/>
</dbReference>
<dbReference type="SUPFAM" id="SSF75445">
    <property type="entry name" value="D-ribose-5-phosphate isomerase (RpiA), lid domain"/>
    <property type="match status" value="1"/>
</dbReference>
<dbReference type="SUPFAM" id="SSF100950">
    <property type="entry name" value="NagB/RpiA/CoA transferase-like"/>
    <property type="match status" value="1"/>
</dbReference>
<keyword id="KW-0413">Isomerase</keyword>
<keyword id="KW-1185">Reference proteome</keyword>
<proteinExistence type="inferred from homology"/>
<gene>
    <name evidence="1" type="primary">rpiA</name>
    <name type="ordered locus">PST_0404</name>
</gene>
<sequence length="223" mass="23725">MTQDQLKQAVAQAAVDHILPKLNDRSIVGVGTGSTANFFIDLLAKHKGFFDGAVASSEATAERLKQHGIPVYDLNSVSELEFYVDGADEANKHLELIKGGGAALTREKIVAAVAKTFICIADGSKLVEQLGAFPLPVEVIPMARSHVARELVKLGGDPVYRDGVVTDNGNVILDVHNLMIGFAPELEGKINDIVGVVSNGLFAMRPADLLLLGTQDGVQTLTR</sequence>
<reference key="1">
    <citation type="journal article" date="2008" name="Proc. Natl. Acad. Sci. U.S.A.">
        <title>Nitrogen fixation island and rhizosphere competence traits in the genome of root-associated Pseudomonas stutzeri A1501.</title>
        <authorList>
            <person name="Yan Y."/>
            <person name="Yang J."/>
            <person name="Dou Y."/>
            <person name="Chen M."/>
            <person name="Ping S."/>
            <person name="Peng J."/>
            <person name="Lu W."/>
            <person name="Zhang W."/>
            <person name="Yao Z."/>
            <person name="Li H."/>
            <person name="Liu W."/>
            <person name="He S."/>
            <person name="Geng L."/>
            <person name="Zhang X."/>
            <person name="Yang F."/>
            <person name="Yu H."/>
            <person name="Zhan Y."/>
            <person name="Li D."/>
            <person name="Lin Z."/>
            <person name="Wang Y."/>
            <person name="Elmerich C."/>
            <person name="Lin M."/>
            <person name="Jin Q."/>
        </authorList>
    </citation>
    <scope>NUCLEOTIDE SEQUENCE [LARGE SCALE GENOMIC DNA]</scope>
    <source>
        <strain>A1501</strain>
    </source>
</reference>
<name>RPIA_STUS1</name>
<feature type="chain" id="PRO_1000016969" description="Ribose-5-phosphate isomerase A">
    <location>
        <begin position="1"/>
        <end position="223"/>
    </location>
</feature>
<feature type="active site" description="Proton acceptor" evidence="1">
    <location>
        <position position="107"/>
    </location>
</feature>
<feature type="binding site" evidence="1">
    <location>
        <begin position="32"/>
        <end position="35"/>
    </location>
    <ligand>
        <name>substrate</name>
    </ligand>
</feature>
<feature type="binding site" evidence="1">
    <location>
        <begin position="85"/>
        <end position="88"/>
    </location>
    <ligand>
        <name>substrate</name>
    </ligand>
</feature>
<feature type="binding site" evidence="1">
    <location>
        <begin position="98"/>
        <end position="101"/>
    </location>
    <ligand>
        <name>substrate</name>
    </ligand>
</feature>
<feature type="binding site" evidence="1">
    <location>
        <position position="125"/>
    </location>
    <ligand>
        <name>substrate</name>
    </ligand>
</feature>
<protein>
    <recommendedName>
        <fullName evidence="1">Ribose-5-phosphate isomerase A</fullName>
        <ecNumber evidence="1">5.3.1.6</ecNumber>
    </recommendedName>
    <alternativeName>
        <fullName evidence="1">Phosphoriboisomerase A</fullName>
        <shortName evidence="1">PRI</shortName>
    </alternativeName>
</protein>
<comment type="function">
    <text evidence="1">Catalyzes the reversible conversion of ribose-5-phosphate to ribulose 5-phosphate.</text>
</comment>
<comment type="catalytic activity">
    <reaction evidence="1">
        <text>aldehydo-D-ribose 5-phosphate = D-ribulose 5-phosphate</text>
        <dbReference type="Rhea" id="RHEA:14657"/>
        <dbReference type="ChEBI" id="CHEBI:58121"/>
        <dbReference type="ChEBI" id="CHEBI:58273"/>
        <dbReference type="EC" id="5.3.1.6"/>
    </reaction>
</comment>
<comment type="pathway">
    <text evidence="1">Carbohydrate degradation; pentose phosphate pathway; D-ribose 5-phosphate from D-ribulose 5-phosphate (non-oxidative stage): step 1/1.</text>
</comment>
<comment type="subunit">
    <text evidence="1">Homodimer.</text>
</comment>
<comment type="similarity">
    <text evidence="1">Belongs to the ribose 5-phosphate isomerase family.</text>
</comment>
<organism>
    <name type="scientific">Stutzerimonas stutzeri (strain A1501)</name>
    <name type="common">Pseudomonas stutzeri</name>
    <dbReference type="NCBI Taxonomy" id="379731"/>
    <lineage>
        <taxon>Bacteria</taxon>
        <taxon>Pseudomonadati</taxon>
        <taxon>Pseudomonadota</taxon>
        <taxon>Gammaproteobacteria</taxon>
        <taxon>Pseudomonadales</taxon>
        <taxon>Pseudomonadaceae</taxon>
        <taxon>Stutzerimonas</taxon>
    </lineage>
</organism>